<accession>Q97PR0</accession>
<keyword id="KW-0030">Aminoacyl-tRNA synthetase</keyword>
<keyword id="KW-0067">ATP-binding</keyword>
<keyword id="KW-0963">Cytoplasm</keyword>
<keyword id="KW-0436">Ligase</keyword>
<keyword id="KW-0547">Nucleotide-binding</keyword>
<keyword id="KW-0648">Protein biosynthesis</keyword>
<keyword id="KW-1185">Reference proteome</keyword>
<comment type="catalytic activity">
    <reaction evidence="1">
        <text>tRNA(Asn) + L-asparagine + ATP = L-asparaginyl-tRNA(Asn) + AMP + diphosphate + H(+)</text>
        <dbReference type="Rhea" id="RHEA:11180"/>
        <dbReference type="Rhea" id="RHEA-COMP:9659"/>
        <dbReference type="Rhea" id="RHEA-COMP:9674"/>
        <dbReference type="ChEBI" id="CHEBI:15378"/>
        <dbReference type="ChEBI" id="CHEBI:30616"/>
        <dbReference type="ChEBI" id="CHEBI:33019"/>
        <dbReference type="ChEBI" id="CHEBI:58048"/>
        <dbReference type="ChEBI" id="CHEBI:78442"/>
        <dbReference type="ChEBI" id="CHEBI:78515"/>
        <dbReference type="ChEBI" id="CHEBI:456215"/>
        <dbReference type="EC" id="6.1.1.22"/>
    </reaction>
</comment>
<comment type="subunit">
    <text evidence="1">Homodimer.</text>
</comment>
<comment type="interaction">
    <interactant intactId="EBI-2207302">
        <id>Q97PR0</id>
    </interactant>
    <interactant intactId="EBI-2207206">
        <id>Q97QS2</id>
        <label>eno</label>
    </interactant>
    <organismsDiffer>false</organismsDiffer>
    <experiments>2</experiments>
</comment>
<comment type="interaction">
    <interactant intactId="EBI-2207302">
        <id>Q97PR0</id>
    </interactant>
    <interactant intactId="EBI-2207053">
        <id>Q97SE5</id>
        <label>gatC</label>
    </interactant>
    <organismsDiffer>false</organismsDiffer>
    <experiments>2</experiments>
</comment>
<comment type="interaction">
    <interactant intactId="EBI-2207302">
        <id>Q97PR0</id>
    </interactant>
    <interactant intactId="EBI-2206949">
        <id>Q97NV3</id>
        <label>groES</label>
    </interactant>
    <organismsDiffer>false</organismsDiffer>
    <experiments>2</experiments>
</comment>
<comment type="subcellular location">
    <subcellularLocation>
        <location evidence="1">Cytoplasm</location>
    </subcellularLocation>
</comment>
<comment type="similarity">
    <text evidence="1">Belongs to the class-II aminoacyl-tRNA synthetase family.</text>
</comment>
<proteinExistence type="evidence at protein level"/>
<organism>
    <name type="scientific">Streptococcus pneumoniae serotype 4 (strain ATCC BAA-334 / TIGR4)</name>
    <dbReference type="NCBI Taxonomy" id="170187"/>
    <lineage>
        <taxon>Bacteria</taxon>
        <taxon>Bacillati</taxon>
        <taxon>Bacillota</taxon>
        <taxon>Bacilli</taxon>
        <taxon>Lactobacillales</taxon>
        <taxon>Streptococcaceae</taxon>
        <taxon>Streptococcus</taxon>
    </lineage>
</organism>
<protein>
    <recommendedName>
        <fullName evidence="1">Asparagine--tRNA ligase</fullName>
        <ecNumber evidence="1">6.1.1.22</ecNumber>
    </recommendedName>
    <alternativeName>
        <fullName evidence="1">Asparaginyl-tRNA synthetase</fullName>
        <shortName evidence="1">AsnRS</shortName>
    </alternativeName>
</protein>
<evidence type="ECO:0000255" key="1">
    <source>
        <dbReference type="HAMAP-Rule" id="MF_00534"/>
    </source>
</evidence>
<feature type="chain" id="PRO_0000176460" description="Asparagine--tRNA ligase">
    <location>
        <begin position="1"/>
        <end position="447"/>
    </location>
</feature>
<name>SYN_STRPN</name>
<gene>
    <name evidence="1" type="primary">asnS</name>
    <name type="ordered locus">SP_1542</name>
</gene>
<dbReference type="EC" id="6.1.1.22" evidence="1"/>
<dbReference type="EMBL" id="AE005672">
    <property type="protein sequence ID" value="AAK75630.1"/>
    <property type="molecule type" value="Genomic_DNA"/>
</dbReference>
<dbReference type="PIR" id="E95179">
    <property type="entry name" value="E95179"/>
</dbReference>
<dbReference type="RefSeq" id="WP_000167151.1">
    <property type="nucleotide sequence ID" value="NZ_AAGY02000012.1"/>
</dbReference>
<dbReference type="SMR" id="Q97PR0"/>
<dbReference type="IntAct" id="Q97PR0">
    <property type="interactions" value="3"/>
</dbReference>
<dbReference type="PaxDb" id="170187-SP_1542"/>
<dbReference type="EnsemblBacteria" id="AAK75630">
    <property type="protein sequence ID" value="AAK75630"/>
    <property type="gene ID" value="SP_1542"/>
</dbReference>
<dbReference type="KEGG" id="spn:SP_1542"/>
<dbReference type="eggNOG" id="COG0017">
    <property type="taxonomic scope" value="Bacteria"/>
</dbReference>
<dbReference type="PhylomeDB" id="Q97PR0"/>
<dbReference type="BioCyc" id="SPNE170187:G1FZB-1560-MONOMER"/>
<dbReference type="Proteomes" id="UP000000585">
    <property type="component" value="Chromosome"/>
</dbReference>
<dbReference type="GO" id="GO:0005737">
    <property type="term" value="C:cytoplasm"/>
    <property type="evidence" value="ECO:0007669"/>
    <property type="project" value="UniProtKB-SubCell"/>
</dbReference>
<dbReference type="GO" id="GO:0004816">
    <property type="term" value="F:asparagine-tRNA ligase activity"/>
    <property type="evidence" value="ECO:0007669"/>
    <property type="project" value="UniProtKB-UniRule"/>
</dbReference>
<dbReference type="GO" id="GO:0005524">
    <property type="term" value="F:ATP binding"/>
    <property type="evidence" value="ECO:0007669"/>
    <property type="project" value="UniProtKB-UniRule"/>
</dbReference>
<dbReference type="GO" id="GO:0140096">
    <property type="term" value="F:catalytic activity, acting on a protein"/>
    <property type="evidence" value="ECO:0007669"/>
    <property type="project" value="UniProtKB-ARBA"/>
</dbReference>
<dbReference type="GO" id="GO:0003676">
    <property type="term" value="F:nucleic acid binding"/>
    <property type="evidence" value="ECO:0007669"/>
    <property type="project" value="InterPro"/>
</dbReference>
<dbReference type="GO" id="GO:0016740">
    <property type="term" value="F:transferase activity"/>
    <property type="evidence" value="ECO:0007669"/>
    <property type="project" value="UniProtKB-ARBA"/>
</dbReference>
<dbReference type="GO" id="GO:0006421">
    <property type="term" value="P:asparaginyl-tRNA aminoacylation"/>
    <property type="evidence" value="ECO:0007669"/>
    <property type="project" value="UniProtKB-UniRule"/>
</dbReference>
<dbReference type="CDD" id="cd04323">
    <property type="entry name" value="AsnRS_cyto_like_N"/>
    <property type="match status" value="1"/>
</dbReference>
<dbReference type="CDD" id="cd00776">
    <property type="entry name" value="AsxRS_core"/>
    <property type="match status" value="1"/>
</dbReference>
<dbReference type="Gene3D" id="3.30.930.10">
    <property type="entry name" value="Bira Bifunctional Protein, Domain 2"/>
    <property type="match status" value="1"/>
</dbReference>
<dbReference type="Gene3D" id="2.40.50.140">
    <property type="entry name" value="Nucleic acid-binding proteins"/>
    <property type="match status" value="1"/>
</dbReference>
<dbReference type="HAMAP" id="MF_00534">
    <property type="entry name" value="Asn_tRNA_synth"/>
    <property type="match status" value="1"/>
</dbReference>
<dbReference type="InterPro" id="IPR004364">
    <property type="entry name" value="Aa-tRNA-synt_II"/>
</dbReference>
<dbReference type="InterPro" id="IPR006195">
    <property type="entry name" value="aa-tRNA-synth_II"/>
</dbReference>
<dbReference type="InterPro" id="IPR045864">
    <property type="entry name" value="aa-tRNA-synth_II/BPL/LPL"/>
</dbReference>
<dbReference type="InterPro" id="IPR004522">
    <property type="entry name" value="Asn-tRNA-ligase"/>
</dbReference>
<dbReference type="InterPro" id="IPR002312">
    <property type="entry name" value="Asp/Asn-tRNA-synth_IIb"/>
</dbReference>
<dbReference type="InterPro" id="IPR012340">
    <property type="entry name" value="NA-bd_OB-fold"/>
</dbReference>
<dbReference type="InterPro" id="IPR004365">
    <property type="entry name" value="NA-bd_OB_tRNA"/>
</dbReference>
<dbReference type="NCBIfam" id="TIGR00457">
    <property type="entry name" value="asnS"/>
    <property type="match status" value="1"/>
</dbReference>
<dbReference type="NCBIfam" id="NF003037">
    <property type="entry name" value="PRK03932.1"/>
    <property type="match status" value="1"/>
</dbReference>
<dbReference type="PANTHER" id="PTHR22594:SF34">
    <property type="entry name" value="ASPARAGINE--TRNA LIGASE, MITOCHONDRIAL-RELATED"/>
    <property type="match status" value="1"/>
</dbReference>
<dbReference type="PANTHER" id="PTHR22594">
    <property type="entry name" value="ASPARTYL/LYSYL-TRNA SYNTHETASE"/>
    <property type="match status" value="1"/>
</dbReference>
<dbReference type="Pfam" id="PF00152">
    <property type="entry name" value="tRNA-synt_2"/>
    <property type="match status" value="1"/>
</dbReference>
<dbReference type="Pfam" id="PF01336">
    <property type="entry name" value="tRNA_anti-codon"/>
    <property type="match status" value="1"/>
</dbReference>
<dbReference type="PRINTS" id="PR01042">
    <property type="entry name" value="TRNASYNTHASP"/>
</dbReference>
<dbReference type="SUPFAM" id="SSF55681">
    <property type="entry name" value="Class II aaRS and biotin synthetases"/>
    <property type="match status" value="1"/>
</dbReference>
<dbReference type="SUPFAM" id="SSF50249">
    <property type="entry name" value="Nucleic acid-binding proteins"/>
    <property type="match status" value="1"/>
</dbReference>
<dbReference type="PROSITE" id="PS50862">
    <property type="entry name" value="AA_TRNA_LIGASE_II"/>
    <property type="match status" value="1"/>
</dbReference>
<sequence>MTKRVTIIDVKDYVGQEVTIGAWVANKSGKGKIAFLQLRDGTAFFQGVAFKPNFVEKFGEEVGLEKFDVIKRLSQETSVYVTGIVKEDERSKFGYELDITDIEVIGESQDYPITPKEHGTDFLMDNRHLWLRSRKQVAVLQIRNAIIYATYEFFDKNGFMKFDSPILSGNAAEDSTELFETDYFGTPAYLSQSGQLYLEAGAMALGRVFDFGPVFRAEKSKTRRHLTEFWMMDAEYSYLTHDESLDLQEAYVKALLQGVLDRAPQALETLERDTELLKRYIAEPFKRITYDQAIDLLQEHENDEDADYEHLEHGDDFGSPHETWISNHFGVPTFVMNYPAAIKAFYMKPVPGNPERVLCADLLAPEGYGEIIGGSMREEDYDALVAKMDELGMDRTEYEFYLDLRKYGTVPHGGFGIGIERMVTFAAGTKHIREAIPFPRMLHRIKP</sequence>
<reference key="1">
    <citation type="journal article" date="2001" name="Science">
        <title>Complete genome sequence of a virulent isolate of Streptococcus pneumoniae.</title>
        <authorList>
            <person name="Tettelin H."/>
            <person name="Nelson K.E."/>
            <person name="Paulsen I.T."/>
            <person name="Eisen J.A."/>
            <person name="Read T.D."/>
            <person name="Peterson S.N."/>
            <person name="Heidelberg J.F."/>
            <person name="DeBoy R.T."/>
            <person name="Haft D.H."/>
            <person name="Dodson R.J."/>
            <person name="Durkin A.S."/>
            <person name="Gwinn M.L."/>
            <person name="Kolonay J.F."/>
            <person name="Nelson W.C."/>
            <person name="Peterson J.D."/>
            <person name="Umayam L.A."/>
            <person name="White O."/>
            <person name="Salzberg S.L."/>
            <person name="Lewis M.R."/>
            <person name="Radune D."/>
            <person name="Holtzapple E.K."/>
            <person name="Khouri H.M."/>
            <person name="Wolf A.M."/>
            <person name="Utterback T.R."/>
            <person name="Hansen C.L."/>
            <person name="McDonald L.A."/>
            <person name="Feldblyum T.V."/>
            <person name="Angiuoli S.V."/>
            <person name="Dickinson T."/>
            <person name="Hickey E.K."/>
            <person name="Holt I.E."/>
            <person name="Loftus B.J."/>
            <person name="Yang F."/>
            <person name="Smith H.O."/>
            <person name="Venter J.C."/>
            <person name="Dougherty B.A."/>
            <person name="Morrison D.A."/>
            <person name="Hollingshead S.K."/>
            <person name="Fraser C.M."/>
        </authorList>
    </citation>
    <scope>NUCLEOTIDE SEQUENCE [LARGE SCALE GENOMIC DNA]</scope>
    <source>
        <strain>ATCC BAA-334 / TIGR4</strain>
    </source>
</reference>